<gene>
    <name type="primary">Cckar</name>
</gene>
<sequence>MSHSPARQHLVESSRMDVVDSLLMNGSNITPPCELGLENETLFCLDQPQPSKEWQSALQILLYSIIFLLSVLGNTLVITVLIRNKRMRTVTNIFLLSLAVSDLMLCLFCMPFNLIPNLLKDFIFGSAVCKTTTYFMGTSVSVSTFNLVAISLERYGAICRPLQSRVWQTKSHALKVIAATWCLSFTIMTPYPIYSNLVPFTKNNNQTANMCRFLLPSDAMQQSWQTFLLLILFLLPGIVMVVAYGLISLELYQGIKFDASQKKSAKEKKPSTGSSTRYEDSDGCYLQKSRPPRKLELQQLSSGSGGSRLNRIRSSSSAANLIAKKRVIRMLIVIVVLFFLCWMPIFSANAWRAYDTVSAEKHLSGTPISFILLLSYTSSCVNPIIYCFMNKRFRLGFMATFPCCPNPGPPGVRGEVGEEEDGRTIRALLSRYSYSHMSTSAPPP</sequence>
<keyword id="KW-1003">Cell membrane</keyword>
<keyword id="KW-0903">Direct protein sequencing</keyword>
<keyword id="KW-1015">Disulfide bond</keyword>
<keyword id="KW-0297">G-protein coupled receptor</keyword>
<keyword id="KW-0325">Glycoprotein</keyword>
<keyword id="KW-0449">Lipoprotein</keyword>
<keyword id="KW-0472">Membrane</keyword>
<keyword id="KW-0564">Palmitate</keyword>
<keyword id="KW-0675">Receptor</keyword>
<keyword id="KW-1185">Reference proteome</keyword>
<keyword id="KW-0807">Transducer</keyword>
<keyword id="KW-0812">Transmembrane</keyword>
<keyword id="KW-1133">Transmembrane helix</keyword>
<organism>
    <name type="scientific">Rattus norvegicus</name>
    <name type="common">Rat</name>
    <dbReference type="NCBI Taxonomy" id="10116"/>
    <lineage>
        <taxon>Eukaryota</taxon>
        <taxon>Metazoa</taxon>
        <taxon>Chordata</taxon>
        <taxon>Craniata</taxon>
        <taxon>Vertebrata</taxon>
        <taxon>Euteleostomi</taxon>
        <taxon>Mammalia</taxon>
        <taxon>Eutheria</taxon>
        <taxon>Euarchontoglires</taxon>
        <taxon>Glires</taxon>
        <taxon>Rodentia</taxon>
        <taxon>Myomorpha</taxon>
        <taxon>Muroidea</taxon>
        <taxon>Muridae</taxon>
        <taxon>Murinae</taxon>
        <taxon>Rattus</taxon>
    </lineage>
</organism>
<proteinExistence type="evidence at protein level"/>
<reference key="1">
    <citation type="journal article" date="1992" name="Proc. Natl. Acad. Sci. U.S.A.">
        <title>Purification, molecular cloning, and functional expression of the cholecystokinin receptor from rat pancreas.</title>
        <authorList>
            <person name="Wank S.A."/>
            <person name="Harkins R."/>
            <person name="Jensen R.T."/>
            <person name="Shapira H."/>
            <person name="de Weerth A."/>
            <person name="Slattery T."/>
        </authorList>
    </citation>
    <scope>NUCLEOTIDE SEQUENCE [MRNA]</scope>
    <scope>PROTEIN SEQUENCE OF 111-158; 270-314 AND 392-402</scope>
    <source>
        <tissue>Pancreas</tissue>
    </source>
</reference>
<reference key="2">
    <citation type="journal article" date="1995" name="Biochem. Biophys. Res. Commun.">
        <title>Gene structure of rat cholecystokinin type-A receptor.</title>
        <authorList>
            <person name="Takata Y."/>
            <person name="Takiguchi S."/>
            <person name="Funakoshi A."/>
            <person name="Kono A."/>
        </authorList>
    </citation>
    <scope>NUCLEOTIDE SEQUENCE [GENOMIC DNA]</scope>
    <scope>TISSUE SPECIFICITY</scope>
    <scope>FUNCTION</scope>
</reference>
<reference key="3">
    <citation type="journal article" date="2003" name="Recept. Channels">
        <title>Disulfide bond structure and accessibility of cysteines in the ectodomain of the cholecystokinin receptor: specific mono-reactive receptor constructs examine charge-sensitivity of loop regions.</title>
        <authorList>
            <person name="Ding X.Q."/>
            <person name="Dolu V."/>
            <person name="Hadac E.M."/>
            <person name="Schuetz M."/>
            <person name="Miller L.J."/>
        </authorList>
    </citation>
    <scope>DISULFIDE BONDS</scope>
</reference>
<reference key="4">
    <citation type="journal article" date="1994" name="Biochem. Biophys. Res. Commun.">
        <title>The seventh transmembrane domain of gastrin/CCK receptors contributes to non-peptide antagonist binding.</title>
        <authorList>
            <person name="Mantamadiotis T."/>
            <person name="Baldwin G.S."/>
        </authorList>
    </citation>
    <scope>ANTAGONIST BINDING</scope>
</reference>
<name>CCKAR_RAT</name>
<feature type="chain" id="PRO_0000069226" description="Cholecystokinin receptor type A">
    <location>
        <begin position="1"/>
        <end position="444"/>
    </location>
</feature>
<feature type="topological domain" description="Extracellular" evidence="2">
    <location>
        <begin position="1"/>
        <end position="56"/>
    </location>
</feature>
<feature type="transmembrane region" description="Helical; Name=1" evidence="2">
    <location>
        <begin position="57"/>
        <end position="82"/>
    </location>
</feature>
<feature type="topological domain" description="Cytoplasmic" evidence="2">
    <location>
        <begin position="83"/>
        <end position="92"/>
    </location>
</feature>
<feature type="transmembrane region" description="Helical; Name=2" evidence="2">
    <location>
        <begin position="93"/>
        <end position="119"/>
    </location>
</feature>
<feature type="topological domain" description="Extracellular" evidence="2">
    <location>
        <begin position="120"/>
        <end position="130"/>
    </location>
</feature>
<feature type="transmembrane region" description="Helical; Name=3" evidence="2">
    <location>
        <begin position="131"/>
        <end position="152"/>
    </location>
</feature>
<feature type="topological domain" description="Cytoplasmic" evidence="2">
    <location>
        <begin position="153"/>
        <end position="172"/>
    </location>
</feature>
<feature type="transmembrane region" description="Helical; Name=4" evidence="2">
    <location>
        <begin position="173"/>
        <end position="193"/>
    </location>
</feature>
<feature type="topological domain" description="Extracellular" evidence="2">
    <location>
        <begin position="194"/>
        <end position="225"/>
    </location>
</feature>
<feature type="transmembrane region" description="Helical; Name=5" evidence="2">
    <location>
        <begin position="226"/>
        <end position="249"/>
    </location>
</feature>
<feature type="topological domain" description="Cytoplasmic" evidence="2">
    <location>
        <begin position="250"/>
        <end position="329"/>
    </location>
</feature>
<feature type="transmembrane region" description="Helical; Name=6" evidence="2">
    <location>
        <begin position="330"/>
        <end position="350"/>
    </location>
</feature>
<feature type="topological domain" description="Extracellular" evidence="2">
    <location>
        <begin position="351"/>
        <end position="365"/>
    </location>
</feature>
<feature type="transmembrane region" description="Helical; Name=7" evidence="2">
    <location>
        <begin position="366"/>
        <end position="389"/>
    </location>
</feature>
<feature type="topological domain" description="Cytoplasmic" evidence="2">
    <location>
        <begin position="390"/>
        <end position="444"/>
    </location>
</feature>
<feature type="region of interest" description="Disordered" evidence="4">
    <location>
        <begin position="263"/>
        <end position="288"/>
    </location>
</feature>
<feature type="lipid moiety-binding region" description="S-palmitoyl cysteine" evidence="1">
    <location>
        <position position="403"/>
    </location>
</feature>
<feature type="glycosylation site" description="N-linked (GlcNAc...) asparagine" evidence="2">
    <location>
        <position position="25"/>
    </location>
</feature>
<feature type="glycosylation site" description="N-linked (GlcNAc...) asparagine" evidence="2">
    <location>
        <position position="39"/>
    </location>
</feature>
<feature type="glycosylation site" description="N-linked (GlcNAc...) asparagine" evidence="2">
    <location>
        <position position="205"/>
    </location>
</feature>
<feature type="disulfide bond" evidence="3 5">
    <location>
        <begin position="33"/>
        <end position="44"/>
    </location>
</feature>
<feature type="disulfide bond" evidence="3">
    <location>
        <begin position="129"/>
        <end position="211"/>
    </location>
</feature>
<evidence type="ECO:0000250" key="1"/>
<evidence type="ECO:0000255" key="2"/>
<evidence type="ECO:0000255" key="3">
    <source>
        <dbReference type="PROSITE-ProRule" id="PRU00521"/>
    </source>
</evidence>
<evidence type="ECO:0000256" key="4">
    <source>
        <dbReference type="SAM" id="MobiDB-lite"/>
    </source>
</evidence>
<evidence type="ECO:0000269" key="5">
    <source>
    </source>
</evidence>
<evidence type="ECO:0000269" key="6">
    <source>
    </source>
</evidence>
<dbReference type="EMBL" id="M88096">
    <property type="protein sequence ID" value="AAA40899.1"/>
    <property type="molecule type" value="mRNA"/>
</dbReference>
<dbReference type="EMBL" id="D50608">
    <property type="protein sequence ID" value="BAA09170.1"/>
    <property type="molecule type" value="Genomic_DNA"/>
</dbReference>
<dbReference type="PIR" id="A42685">
    <property type="entry name" value="A42685"/>
</dbReference>
<dbReference type="RefSeq" id="NP_036820.1">
    <property type="nucleotide sequence ID" value="NM_012688.3"/>
</dbReference>
<dbReference type="SMR" id="P30551"/>
<dbReference type="CORUM" id="P30551"/>
<dbReference type="FunCoup" id="P30551">
    <property type="interactions" value="58"/>
</dbReference>
<dbReference type="STRING" id="10116.ENSRNOP00000063137"/>
<dbReference type="BindingDB" id="P30551"/>
<dbReference type="ChEMBL" id="CHEMBL2871"/>
<dbReference type="DrugCentral" id="P30551"/>
<dbReference type="GuidetoPHARMACOLOGY" id="76"/>
<dbReference type="GlyCosmos" id="P30551">
    <property type="glycosylation" value="3 sites, No reported glycans"/>
</dbReference>
<dbReference type="GlyGen" id="P30551">
    <property type="glycosylation" value="3 sites"/>
</dbReference>
<dbReference type="iPTMnet" id="P30551"/>
<dbReference type="PhosphoSitePlus" id="P30551"/>
<dbReference type="PaxDb" id="10116-ENSRNOP00000063137"/>
<dbReference type="GeneID" id="24889"/>
<dbReference type="KEGG" id="rno:24889"/>
<dbReference type="AGR" id="RGD:2289"/>
<dbReference type="CTD" id="886"/>
<dbReference type="RGD" id="2289">
    <property type="gene designation" value="Cckar"/>
</dbReference>
<dbReference type="eggNOG" id="KOG3656">
    <property type="taxonomic scope" value="Eukaryota"/>
</dbReference>
<dbReference type="InParanoid" id="P30551"/>
<dbReference type="OrthoDB" id="5987936at2759"/>
<dbReference type="PhylomeDB" id="P30551"/>
<dbReference type="Reactome" id="R-RNO-375276">
    <property type="pathway name" value="Peptide ligand-binding receptors"/>
</dbReference>
<dbReference type="Reactome" id="R-RNO-416476">
    <property type="pathway name" value="G alpha (q) signalling events"/>
</dbReference>
<dbReference type="PRO" id="PR:P30551"/>
<dbReference type="Proteomes" id="UP000002494">
    <property type="component" value="Unplaced"/>
</dbReference>
<dbReference type="GO" id="GO:0005768">
    <property type="term" value="C:endosome"/>
    <property type="evidence" value="ECO:0000314"/>
    <property type="project" value="RGD"/>
</dbReference>
<dbReference type="GO" id="GO:0016020">
    <property type="term" value="C:membrane"/>
    <property type="evidence" value="ECO:0000266"/>
    <property type="project" value="RGD"/>
</dbReference>
<dbReference type="GO" id="GO:0005886">
    <property type="term" value="C:plasma membrane"/>
    <property type="evidence" value="ECO:0000318"/>
    <property type="project" value="GO_Central"/>
</dbReference>
<dbReference type="GO" id="GO:0043195">
    <property type="term" value="C:terminal bouton"/>
    <property type="evidence" value="ECO:0000314"/>
    <property type="project" value="RGD"/>
</dbReference>
<dbReference type="GO" id="GO:0004951">
    <property type="term" value="F:cholecystokinin receptor activity"/>
    <property type="evidence" value="ECO:0000314"/>
    <property type="project" value="RGD"/>
</dbReference>
<dbReference type="GO" id="GO:0017046">
    <property type="term" value="F:peptide hormone binding"/>
    <property type="evidence" value="ECO:0000266"/>
    <property type="project" value="RGD"/>
</dbReference>
<dbReference type="GO" id="GO:0031100">
    <property type="term" value="P:animal organ regeneration"/>
    <property type="evidence" value="ECO:0000270"/>
    <property type="project" value="RGD"/>
</dbReference>
<dbReference type="GO" id="GO:0007409">
    <property type="term" value="P:axonogenesis"/>
    <property type="evidence" value="ECO:0000266"/>
    <property type="project" value="RGD"/>
</dbReference>
<dbReference type="GO" id="GO:0032870">
    <property type="term" value="P:cellular response to hormone stimulus"/>
    <property type="evidence" value="ECO:0000270"/>
    <property type="project" value="RGD"/>
</dbReference>
<dbReference type="GO" id="GO:0038188">
    <property type="term" value="P:cholecystokinin signaling pathway"/>
    <property type="evidence" value="ECO:0000266"/>
    <property type="project" value="RGD"/>
</dbReference>
<dbReference type="GO" id="GO:0042755">
    <property type="term" value="P:eating behavior"/>
    <property type="evidence" value="ECO:0000315"/>
    <property type="project" value="RGD"/>
</dbReference>
<dbReference type="GO" id="GO:0007631">
    <property type="term" value="P:feeding behavior"/>
    <property type="evidence" value="ECO:0000314"/>
    <property type="project" value="RGD"/>
</dbReference>
<dbReference type="GO" id="GO:0030900">
    <property type="term" value="P:forebrain development"/>
    <property type="evidence" value="ECO:0000266"/>
    <property type="project" value="RGD"/>
</dbReference>
<dbReference type="GO" id="GO:0007186">
    <property type="term" value="P:G protein-coupled receptor signaling pathway"/>
    <property type="evidence" value="ECO:0000318"/>
    <property type="project" value="GO_Central"/>
</dbReference>
<dbReference type="GO" id="GO:0001696">
    <property type="term" value="P:gastric acid secretion"/>
    <property type="evidence" value="ECO:0000314"/>
    <property type="project" value="RGD"/>
</dbReference>
<dbReference type="GO" id="GO:0030073">
    <property type="term" value="P:insulin secretion"/>
    <property type="evidence" value="ECO:0000314"/>
    <property type="project" value="RGD"/>
</dbReference>
<dbReference type="GO" id="GO:0001764">
    <property type="term" value="P:neuron migration"/>
    <property type="evidence" value="ECO:0000266"/>
    <property type="project" value="RGD"/>
</dbReference>
<dbReference type="GO" id="GO:0031016">
    <property type="term" value="P:pancreas development"/>
    <property type="evidence" value="ECO:0000270"/>
    <property type="project" value="RGD"/>
</dbReference>
<dbReference type="GO" id="GO:0007204">
    <property type="term" value="P:positive regulation of cytosolic calcium ion concentration"/>
    <property type="evidence" value="ECO:0000314"/>
    <property type="project" value="RGD"/>
</dbReference>
<dbReference type="GO" id="GO:0090274">
    <property type="term" value="P:positive regulation of somatostatin secretion"/>
    <property type="evidence" value="ECO:0000315"/>
    <property type="project" value="RGD"/>
</dbReference>
<dbReference type="GO" id="GO:0002023">
    <property type="term" value="P:reduction of food intake in response to dietary excess"/>
    <property type="evidence" value="ECO:0000315"/>
    <property type="project" value="RGD"/>
</dbReference>
<dbReference type="GO" id="GO:0051924">
    <property type="term" value="P:regulation of calcium ion transport"/>
    <property type="evidence" value="ECO:0000314"/>
    <property type="project" value="RGD"/>
</dbReference>
<dbReference type="GO" id="GO:0046883">
    <property type="term" value="P:regulation of hormone secretion"/>
    <property type="evidence" value="ECO:0000318"/>
    <property type="project" value="GO_Central"/>
</dbReference>
<dbReference type="GO" id="GO:0043266">
    <property type="term" value="P:regulation of potassium ion transport"/>
    <property type="evidence" value="ECO:0000314"/>
    <property type="project" value="RGD"/>
</dbReference>
<dbReference type="GO" id="GO:0051384">
    <property type="term" value="P:response to glucocorticoid"/>
    <property type="evidence" value="ECO:0000270"/>
    <property type="project" value="RGD"/>
</dbReference>
<dbReference type="GO" id="GO:0032496">
    <property type="term" value="P:response to lipopolysaccharide"/>
    <property type="evidence" value="ECO:0000270"/>
    <property type="project" value="RGD"/>
</dbReference>
<dbReference type="GO" id="GO:0007584">
    <property type="term" value="P:response to nutrient"/>
    <property type="evidence" value="ECO:0000270"/>
    <property type="project" value="RGD"/>
</dbReference>
<dbReference type="GO" id="GO:0042594">
    <property type="term" value="P:response to starvation"/>
    <property type="evidence" value="ECO:0000315"/>
    <property type="project" value="RGD"/>
</dbReference>
<dbReference type="GO" id="GO:0048545">
    <property type="term" value="P:response to steroid hormone"/>
    <property type="evidence" value="ECO:0000270"/>
    <property type="project" value="RGD"/>
</dbReference>
<dbReference type="GO" id="GO:0001659">
    <property type="term" value="P:temperature homeostasis"/>
    <property type="evidence" value="ECO:0000315"/>
    <property type="project" value="RGD"/>
</dbReference>
<dbReference type="FunFam" id="1.20.1070.10:FF:000168">
    <property type="entry name" value="Cholecystokinin receptor type A"/>
    <property type="match status" value="1"/>
</dbReference>
<dbReference type="FunFam" id="1.20.1070.10:FF:000254">
    <property type="entry name" value="Cholecystokinin receptor type A"/>
    <property type="match status" value="1"/>
</dbReference>
<dbReference type="FunFam" id="4.10.670.10:FF:000001">
    <property type="entry name" value="cholecystokinin receptor type A"/>
    <property type="match status" value="1"/>
</dbReference>
<dbReference type="Gene3D" id="4.10.670.10">
    <property type="entry name" value="Cholecystokinin A receptor, N-terminal domain"/>
    <property type="match status" value="1"/>
</dbReference>
<dbReference type="Gene3D" id="1.20.1070.10">
    <property type="entry name" value="Rhodopsin 7-helix transmembrane proteins"/>
    <property type="match status" value="1"/>
</dbReference>
<dbReference type="InterPro" id="IPR009126">
    <property type="entry name" value="Cholcskin_rcpt"/>
</dbReference>
<dbReference type="InterPro" id="IPR000596">
    <property type="entry name" value="Cholcy_rcpt_A"/>
</dbReference>
<dbReference type="InterPro" id="IPR015276">
    <property type="entry name" value="CholecystokininA_recpt_N"/>
</dbReference>
<dbReference type="InterPro" id="IPR036472">
    <property type="entry name" value="CholecystokininA_recpt_N_sf"/>
</dbReference>
<dbReference type="InterPro" id="IPR000276">
    <property type="entry name" value="GPCR_Rhodpsn"/>
</dbReference>
<dbReference type="InterPro" id="IPR017452">
    <property type="entry name" value="GPCR_Rhodpsn_7TM"/>
</dbReference>
<dbReference type="PANTHER" id="PTHR24238:SF81">
    <property type="entry name" value="CHOLECYSTOKININ RECEPTOR TYPE A"/>
    <property type="match status" value="1"/>
</dbReference>
<dbReference type="PANTHER" id="PTHR24238">
    <property type="entry name" value="G-PROTEIN COUPLED RECEPTOR"/>
    <property type="match status" value="1"/>
</dbReference>
<dbReference type="Pfam" id="PF00001">
    <property type="entry name" value="7tm_1"/>
    <property type="match status" value="1"/>
</dbReference>
<dbReference type="Pfam" id="PF09193">
    <property type="entry name" value="CholecysA-Rec_N"/>
    <property type="match status" value="1"/>
</dbReference>
<dbReference type="PRINTS" id="PR01822">
    <property type="entry name" value="CCYSTOKININR"/>
</dbReference>
<dbReference type="PRINTS" id="PR00524">
    <property type="entry name" value="CCYSTOKNINAR"/>
</dbReference>
<dbReference type="PRINTS" id="PR00237">
    <property type="entry name" value="GPCRRHODOPSN"/>
</dbReference>
<dbReference type="SMART" id="SM01381">
    <property type="entry name" value="7TM_GPCR_Srsx"/>
    <property type="match status" value="1"/>
</dbReference>
<dbReference type="SUPFAM" id="SSF81321">
    <property type="entry name" value="Family A G protein-coupled receptor-like"/>
    <property type="match status" value="1"/>
</dbReference>
<dbReference type="PROSITE" id="PS00237">
    <property type="entry name" value="G_PROTEIN_RECEP_F1_1"/>
    <property type="match status" value="1"/>
</dbReference>
<dbReference type="PROSITE" id="PS50262">
    <property type="entry name" value="G_PROTEIN_RECEP_F1_2"/>
    <property type="match status" value="1"/>
</dbReference>
<protein>
    <recommendedName>
        <fullName>Cholecystokinin receptor type A</fullName>
        <shortName>CCK-A receptor</shortName>
        <shortName>CCK-AR</shortName>
    </recommendedName>
    <alternativeName>
        <fullName>Cholecystokinin-1 receptor</fullName>
        <shortName>CCK1-R</shortName>
    </alternativeName>
</protein>
<comment type="function">
    <text evidence="6">Receptor for cholecystokinin. Mediates pancreatic growth and enzyme secretion, smooth muscle contraction of the gall bladder and stomach. Has a 1000-fold higher affinity for CCK rather than for gastrin. It modulates feeding and dopamine-induced behavior in the central and peripheral nervous system. This receptor mediates its action by association with G proteins that activate a phosphatidylinositol-calcium second messenger system.</text>
</comment>
<comment type="subcellular location">
    <subcellularLocation>
        <location>Cell membrane</location>
        <topology>Multi-pass membrane protein</topology>
    </subcellularLocation>
</comment>
<comment type="tissue specificity">
    <text evidence="6">Pancreas and brain. Also expressed in the gastrointestinal system and vagus nerve.</text>
</comment>
<comment type="similarity">
    <text evidence="3">Belongs to the G-protein coupled receptor 1 family.</text>
</comment>
<accession>P30551</accession>